<sequence>MSTKLILSFSLCLMVLSCSAQAAQLWPWRKGQDSRPHHGHQQFQQQCDIQRLTASEPSRRVRSEAGVTEIWDHNTPEFRCTGFVAVRYVIQPGGLLLPSYSNAPYITFVEQGRGVQGVVIPGCPETFQSDSEYPQSQRGQHSRESESQESSRGDQHQKIFRVREGDVIPSPAGVVQWTHNDGDQDLISVTLLDANSFHNQLDENVRSFFLAGQSQQGREERRSQQQTREEGGDRQSRESDDVEALIGANILSGFQDEILHELFRDVDRETISKLRGENDQRGFIVQAQDLKLRVPEDSEEGYERQRGDRKRDERGSGRSNGLEQAFCNLKFRQNVNRPSHADVFNPRAGRINTVNSNNLPILEFLQLSAQHVVLYKNAIIGPRWNLNAHSALYVTRGEGRVQVVGDEGKSVFDDNVQRGQILVVPQGFAVVVKAGRQGLEWVELKNNDNAITSPIAGRTSVLRAIPVEVLANSYDISTEEAYKLKNGRQEVEVFRPFQSRYEKEEEKERERFSIV</sequence>
<dbReference type="EMBL" id="DQ849083">
    <property type="protein sequence ID" value="ABI32184.1"/>
    <property type="molecule type" value="mRNA"/>
</dbReference>
<dbReference type="EMBL" id="AY044918">
    <property type="protein sequence ID" value="AAK97787.1"/>
    <property type="molecule type" value="mRNA"/>
</dbReference>
<dbReference type="SMR" id="A9NJG2"/>
<dbReference type="Allergome" id="1534">
    <property type="allergen name" value="Fag t 1"/>
</dbReference>
<dbReference type="GO" id="GO:0019863">
    <property type="term" value="F:IgE binding"/>
    <property type="evidence" value="ECO:0007669"/>
    <property type="project" value="UniProtKB-KW"/>
</dbReference>
<dbReference type="GO" id="GO:0019864">
    <property type="term" value="F:IgG binding"/>
    <property type="evidence" value="ECO:0007669"/>
    <property type="project" value="UniProtKB-KW"/>
</dbReference>
<dbReference type="GO" id="GO:0045735">
    <property type="term" value="F:nutrient reservoir activity"/>
    <property type="evidence" value="ECO:0007669"/>
    <property type="project" value="UniProtKB-KW"/>
</dbReference>
<dbReference type="CDD" id="cd02243">
    <property type="entry name" value="cupin_11S_legumin_C"/>
    <property type="match status" value="1"/>
</dbReference>
<dbReference type="CDD" id="cd02242">
    <property type="entry name" value="cupin_11S_legumin_N"/>
    <property type="match status" value="1"/>
</dbReference>
<dbReference type="FunFam" id="2.60.120.10:FF:000073">
    <property type="entry name" value="Glycinin G1"/>
    <property type="match status" value="1"/>
</dbReference>
<dbReference type="Gene3D" id="2.60.120.10">
    <property type="entry name" value="Jelly Rolls"/>
    <property type="match status" value="2"/>
</dbReference>
<dbReference type="InterPro" id="IPR006044">
    <property type="entry name" value="11S_seedstore_pln"/>
</dbReference>
<dbReference type="InterPro" id="IPR006045">
    <property type="entry name" value="Cupin_1"/>
</dbReference>
<dbReference type="InterPro" id="IPR014710">
    <property type="entry name" value="RmlC-like_jellyroll"/>
</dbReference>
<dbReference type="InterPro" id="IPR011051">
    <property type="entry name" value="RmlC_Cupin_sf"/>
</dbReference>
<dbReference type="InterPro" id="IPR050253">
    <property type="entry name" value="Seed_Storage-Functional"/>
</dbReference>
<dbReference type="PANTHER" id="PTHR31189:SF76">
    <property type="entry name" value="11S GLOBULIN SUBUNIT BETA-LIKE"/>
    <property type="match status" value="1"/>
</dbReference>
<dbReference type="PANTHER" id="PTHR31189">
    <property type="entry name" value="OS03G0336100 PROTEIN-RELATED"/>
    <property type="match status" value="1"/>
</dbReference>
<dbReference type="Pfam" id="PF00190">
    <property type="entry name" value="Cupin_1"/>
    <property type="match status" value="2"/>
</dbReference>
<dbReference type="PRINTS" id="PR00439">
    <property type="entry name" value="11SGLOBULIN"/>
</dbReference>
<dbReference type="SMART" id="SM00835">
    <property type="entry name" value="Cupin_1"/>
    <property type="match status" value="2"/>
</dbReference>
<dbReference type="SUPFAM" id="SSF51182">
    <property type="entry name" value="RmlC-like cupins"/>
    <property type="match status" value="1"/>
</dbReference>
<reference evidence="23" key="1">
    <citation type="journal article" date="2008" name="J. Agric. Food Chem.">
        <title>Molecular cloning, recombinant expression, and immunological characterization of a novel allergen from tartary buckwheat.</title>
        <authorList>
            <person name="Zhang X."/>
            <person name="Yuan J.M."/>
            <person name="Cui X.D."/>
            <person name="Wang Z.H."/>
        </authorList>
    </citation>
    <scope>NUCLEOTIDE SEQUENCE [MRNA]</scope>
    <scope>DEVELOPMENTAL STAGE</scope>
    <scope>ALLERGEN</scope>
    <scope>PHYLOGENETIC ANALYSIS</scope>
    <source>
        <tissue evidence="13">Immature seed</tissue>
    </source>
</reference>
<reference evidence="22" key="2">
    <citation type="journal article" date="2006" name="Biosci. Biotechnol. Biochem.">
        <title>Cloning, expression, and identification of immunological activity of an allergenic protein in tartary buckwheat.</title>
        <authorList>
            <person name="Wang Z."/>
            <person name="Wang L."/>
            <person name="Chang W."/>
            <person name="Li Y."/>
            <person name="Zhang Z."/>
            <person name="Wieslander G."/>
            <person name="Norback D."/>
        </authorList>
    </citation>
    <scope>NUCLEOTIDE SEQUENCE [MRNA] OF 321-515</scope>
    <scope>DEVELOPMENTAL STAGE</scope>
    <scope>ALLERGEN</scope>
    <source>
        <tissue evidence="12">Radicle</tissue>
    </source>
</reference>
<reference key="3">
    <citation type="journal article" date="2004" name="Biosci. Biotechnol. Biochem.">
        <title>Purification and characterization of a 24 kDa protein from tartary buckwheat seeds.</title>
        <authorList>
            <person name="Wang Z."/>
            <person name="Zhang Z."/>
            <person name="Zhao Z."/>
            <person name="Wieslander G."/>
            <person name="Norbaeck D."/>
            <person name="Kreft I."/>
        </authorList>
    </citation>
    <scope>BIOPHYSICOCHEMICAL PROPERTIES</scope>
    <scope>TISSUE SPECIFICITY</scope>
    <scope>ALLERGEN</scope>
</reference>
<reference key="4">
    <citation type="journal article" date="2010" name="Biotechnol. Lett.">
        <title>Epitope mapping and immunological characterization of a major allergen TBa in tartary buckwheat.</title>
        <authorList>
            <person name="Ren X."/>
            <person name="Zhang X."/>
            <person name="Li Y."/>
            <person name="Wang Z."/>
        </authorList>
    </citation>
    <scope>ALLERGEN</scope>
    <scope>BIOTECHNOLOGY</scope>
    <scope>REGIONS</scope>
    <scope>MUTAGENESIS OF LEU-359; LEU-362; LEU-367; VAL-372 AND LEU-374</scope>
</reference>
<reference key="5">
    <citation type="journal article" date="2011" name="Acta Biochim. Biophys. Sin.">
        <title>Epitope mapping and identification on a 3D model built for the tartary buckwheat allergic protein TBb.</title>
        <authorList>
            <person name="Li P."/>
            <person name="Cui X."/>
            <person name="Li Y."/>
            <person name="Wang Z."/>
        </authorList>
    </citation>
    <scope>ALLERGEN</scope>
    <scope>BIOTECHNOLOGY</scope>
    <scope>REGIONS</scope>
    <scope>SITE</scope>
    <scope>MUTAGENESIS OF ARG-161; ARG-163 AND ASP-166</scope>
    <scope>3D-STRUCTURE MODELING</scope>
</reference>
<reference key="6">
    <citation type="journal article" date="2012" name="Food Chem. Toxicol.">
        <title>Synthesis of hypoallergenic derivatives of the major allergen Fag t 1 from tartary buckwheat via sequence restructuring.</title>
        <authorList>
            <person name="Yang Z."/>
            <person name="Li Y."/>
            <person name="Li C."/>
            <person name="Wang Z."/>
        </authorList>
    </citation>
    <scope>ALLERGEN</scope>
    <scope>BIOTECHNOLOGY</scope>
    <scope>3D-STRUCTURE MODELING</scope>
    <scope>CIRCULAR DICHROISM ANALYSIS</scope>
</reference>
<keyword id="KW-0020">Allergen</keyword>
<keyword id="KW-1015">Disulfide bond</keyword>
<keyword id="KW-0389">IgE-binding protein</keyword>
<keyword id="KW-0390">IgG-binding protein</keyword>
<keyword id="KW-0708">Seed storage protein</keyword>
<keyword id="KW-0732">Signal</keyword>
<keyword id="KW-0758">Storage protein</keyword>
<comment type="function">
    <text evidence="17">Seed storage protein.</text>
</comment>
<comment type="biophysicochemical properties">
    <temperatureDependence>
        <text evidence="5">Highly thermostable. Loss of stability only after incubation for 1 hour at 100 degrees Celsius.</text>
    </temperatureDependence>
</comment>
<comment type="subunit">
    <text evidence="1">Homohexamer.</text>
</comment>
<comment type="tissue specificity">
    <text evidence="5">Expressed in seeds (at protein level).</text>
</comment>
<comment type="developmental stage">
    <text evidence="6 7">Expressed in immature seeds at 20 days after flowering (PubMed:18980324). Expressed in radicles (PubMed:16717422).</text>
</comment>
<comment type="PTM">
    <text evidence="1">Proteolytically processed from a single precursor to produce an acidic and a basic chain that are linked by a disulfide bond.</text>
</comment>
<comment type="allergen">
    <text evidence="5 6 7 8 9 10">Causes an allergic reaction in human (PubMed:15277744, PubMed:16717422, PubMed:18980324, PubMed:20431913, PubMed:21571740, PubMed:22449541). Natural protein binds to IgE in all 5 buckwheat-allergic patients tested. Natural protein is susceptible to digestion with pepsin, but resistant to digestion with trypsin. Recombinant protein binds to IgG of buckwheat-allergic patients (PubMed:22449541). Recombinant full-length protein (rTBt) binds to IgE of patients allergic to buckwheat (PubMed:18980324, PubMed:22449541). Recombinant N-terminal subunit (rTBb) binds to IgE of patients allergic to buckwheat (PubMed:21571740). Recombinant C-terminal subunit (rTBa) binds to IgE of patients allergic to buckwheat (PubMed:16717422, PubMed:18980324, PubMed:20431913). Natural 24 kDa protein binds to IgE of patients allergic to buckwheat (PubMed:15277744). Both the recombinant rTBb and rTBa have higher IgE-binding activity than rTBt (PubMed:18980324).</text>
</comment>
<comment type="biotechnology">
    <text evidence="8 9 10">This protein, when mutated, can potentially be applicable to the development of transgenic hypoallergenic crops of tartarian buckwheat and specific immunotherapy to treat tartarian buckwheat allergy (PubMed:20431913, PubMed:21571740). Destructing the native conformation of this protein significantly reduces its allergenicity and it may be a candidate for the development of vaccine that builds immunotolerance in individuals with buckwheat allergy. Production of mosaic molecules which are reassembled derivatives of the protein may have advantages compared to production of modified fragments. The treatment can be achieved with a single molecule that is more stable and easier to produce and purify. The production is also more cost-effective than with chemically modified allergens (PubMed:22449541).</text>
</comment>
<comment type="similarity">
    <text evidence="17">Belongs to the 11S seed storage protein (globulins) family.</text>
</comment>
<organism evidence="23">
    <name type="scientific">Fagopyrum tataricum</name>
    <name type="common">Tartarian buckwheat</name>
    <name type="synonym">Polygonum tataricum</name>
    <dbReference type="NCBI Taxonomy" id="62330"/>
    <lineage>
        <taxon>Eukaryota</taxon>
        <taxon>Viridiplantae</taxon>
        <taxon>Streptophyta</taxon>
        <taxon>Embryophyta</taxon>
        <taxon>Tracheophyta</taxon>
        <taxon>Spermatophyta</taxon>
        <taxon>Magnoliopsida</taxon>
        <taxon>eudicotyledons</taxon>
        <taxon>Gunneridae</taxon>
        <taxon>Pentapetalae</taxon>
        <taxon>Caryophyllales</taxon>
        <taxon>Polygonaceae</taxon>
        <taxon>Polygonoideae</taxon>
        <taxon>Fagopyreae</taxon>
        <taxon>Fagopyrum</taxon>
    </lineage>
</organism>
<protein>
    <recommendedName>
        <fullName evidence="13">13S globulin seed storage protein</fullName>
    </recommendedName>
    <alternativeName>
        <fullName evidence="13">13S globulin</fullName>
    </alternativeName>
    <alternativeName>
        <fullName evidence="12 16">Legumin-like protein</fullName>
    </alternativeName>
    <alternativeName>
        <fullName evidence="16">Major allergen Fag t 1</fullName>
    </alternativeName>
    <alternativeName>
        <fullName evidence="13 15">TBt</fullName>
    </alternativeName>
    <allergenName evidence="17">Fag t 1</allergenName>
    <component>
        <recommendedName>
            <fullName evidence="17">13S globulin seed storage protein acidic chain</fullName>
        </recommendedName>
        <alternativeName>
            <fullName evidence="17">13S globulin TBb chain</fullName>
        </alternativeName>
        <alternativeName>
            <fullName evidence="15">34 kDa allergenic protein</fullName>
        </alternativeName>
        <alternativeName>
            <fullName evidence="17">Allergen b</fullName>
        </alternativeName>
        <alternativeName>
            <fullName evidence="15">N-terminal subunit TBb</fullName>
        </alternativeName>
        <alternativeName>
            <fullName evidence="13 15">TBb</fullName>
        </alternativeName>
    </component>
    <component>
        <recommendedName>
            <fullName evidence="17">13S globulin seed storage protein basic chain</fullName>
        </recommendedName>
        <alternativeName>
            <fullName evidence="17">13S globulin TBa chain</fullName>
        </alternativeName>
        <alternativeName>
            <fullName evidence="12">Allergen a</fullName>
        </alternativeName>
        <alternativeName>
            <fullName evidence="15">C-terminal subunit TBa</fullName>
        </alternativeName>
        <alternativeName>
            <fullName evidence="22">FTAP</fullName>
        </alternativeName>
        <alternativeName>
            <fullName evidence="11 12">Major 24 kDa allergenic protein</fullName>
        </alternativeName>
        <alternativeName>
            <fullName evidence="12 13 14 15">TBa</fullName>
        </alternativeName>
    </component>
</protein>
<name>13S_FAGTA</name>
<evidence type="ECO:0000250" key="1">
    <source>
        <dbReference type="UniProtKB" id="A0A1L6K371"/>
    </source>
</evidence>
<evidence type="ECO:0000250" key="2">
    <source>
        <dbReference type="UniProtKB" id="P04776"/>
    </source>
</evidence>
<evidence type="ECO:0000255" key="3"/>
<evidence type="ECO:0000256" key="4">
    <source>
        <dbReference type="SAM" id="MobiDB-lite"/>
    </source>
</evidence>
<evidence type="ECO:0000269" key="5">
    <source>
    </source>
</evidence>
<evidence type="ECO:0000269" key="6">
    <source>
    </source>
</evidence>
<evidence type="ECO:0000269" key="7">
    <source>
    </source>
</evidence>
<evidence type="ECO:0000269" key="8">
    <source>
    </source>
</evidence>
<evidence type="ECO:0000269" key="9">
    <source>
    </source>
</evidence>
<evidence type="ECO:0000269" key="10">
    <source>
    </source>
</evidence>
<evidence type="ECO:0000303" key="11">
    <source>
    </source>
</evidence>
<evidence type="ECO:0000303" key="12">
    <source>
    </source>
</evidence>
<evidence type="ECO:0000303" key="13">
    <source>
    </source>
</evidence>
<evidence type="ECO:0000303" key="14">
    <source>
    </source>
</evidence>
<evidence type="ECO:0000303" key="15">
    <source>
    </source>
</evidence>
<evidence type="ECO:0000303" key="16">
    <source>
    </source>
</evidence>
<evidence type="ECO:0000305" key="17"/>
<evidence type="ECO:0000305" key="18">
    <source>
    </source>
</evidence>
<evidence type="ECO:0000305" key="19">
    <source>
    </source>
</evidence>
<evidence type="ECO:0000305" key="20">
    <source>
    </source>
</evidence>
<evidence type="ECO:0000305" key="21">
    <source>
    </source>
</evidence>
<evidence type="ECO:0000312" key="22">
    <source>
        <dbReference type="EMBL" id="AAK97787.1"/>
    </source>
</evidence>
<evidence type="ECO:0000312" key="23">
    <source>
        <dbReference type="EMBL" id="ABI32184.1"/>
    </source>
</evidence>
<accession>A9NJG2</accession>
<accession>Q8LGR7</accession>
<proteinExistence type="evidence at protein level"/>
<feature type="signal peptide" evidence="3">
    <location>
        <begin position="1"/>
        <end position="22"/>
    </location>
</feature>
<feature type="chain" id="PRO_5002741086" description="13S globulin seed storage protein" evidence="3 19">
    <location>
        <begin position="23"/>
        <end position="515"/>
    </location>
</feature>
<feature type="chain" id="PRO_0000455376" description="13S globulin seed storage protein acidic chain" evidence="3 19 21">
    <location>
        <begin position="23"/>
        <end position="320"/>
    </location>
</feature>
<feature type="chain" id="PRO_0000455377" description="13S globulin seed storage protein basic chain" evidence="18 19 20">
    <location>
        <begin position="321"/>
        <end position="515"/>
    </location>
</feature>
<feature type="domain" description="Cupin type-1 1" evidence="3">
    <location>
        <begin position="52"/>
        <end position="272"/>
    </location>
</feature>
<feature type="domain" description="Cupin type-1 2" evidence="3">
    <location>
        <begin position="333"/>
        <end position="482"/>
    </location>
</feature>
<feature type="region of interest" description="IgE-binding epitope" evidence="9">
    <location>
        <begin position="23"/>
        <end position="96"/>
    </location>
</feature>
<feature type="region of interest" description="IgE-binding epitope with a very strong IgE-binding activity" evidence="9">
    <location>
        <begin position="97"/>
        <end position="172"/>
    </location>
</feature>
<feature type="region of interest" description="Disordered" evidence="4">
    <location>
        <begin position="123"/>
        <end position="156"/>
    </location>
</feature>
<feature type="region of interest" description="IgE-binding epitope" evidence="9">
    <location>
        <begin position="173"/>
        <end position="248"/>
    </location>
</feature>
<feature type="region of interest" description="Disordered" evidence="4">
    <location>
        <begin position="210"/>
        <end position="241"/>
    </location>
</feature>
<feature type="region of interest" description="IgE-binding epitope" evidence="9">
    <location>
        <begin position="249"/>
        <end position="320"/>
    </location>
</feature>
<feature type="region of interest" description="Disordered" evidence="4">
    <location>
        <begin position="295"/>
        <end position="320"/>
    </location>
</feature>
<feature type="region of interest" description="IgE-binding epitope with a strong IgE-binding activity" evidence="8">
    <location>
        <begin position="347"/>
        <end position="387"/>
    </location>
</feature>
<feature type="region of interest" description="IgE-binding epitope" evidence="8">
    <location>
        <begin position="407"/>
        <end position="457"/>
    </location>
</feature>
<feature type="region of interest" description="IgE-binding epitope" evidence="8">
    <location>
        <begin position="440"/>
        <end position="476"/>
    </location>
</feature>
<feature type="region of interest" description="IgE-binding epitope" evidence="8">
    <location>
        <begin position="475"/>
        <end position="511"/>
    </location>
</feature>
<feature type="compositionally biased region" description="Basic and acidic residues" evidence="4">
    <location>
        <begin position="141"/>
        <end position="156"/>
    </location>
</feature>
<feature type="compositionally biased region" description="Basic and acidic residues" evidence="4">
    <location>
        <begin position="217"/>
        <end position="239"/>
    </location>
</feature>
<feature type="compositionally biased region" description="Basic and acidic residues" evidence="4">
    <location>
        <begin position="295"/>
        <end position="316"/>
    </location>
</feature>
<feature type="site" description="Critical for IgE-binding" evidence="9">
    <location>
        <position position="163"/>
    </location>
</feature>
<feature type="disulfide bond" evidence="2">
    <location>
        <begin position="47"/>
        <end position="80"/>
    </location>
</feature>
<feature type="disulfide bond" description="Interchain (between acidic and basic chains)" evidence="2">
    <location>
        <begin position="123"/>
        <end position="327"/>
    </location>
</feature>
<feature type="mutagenesis site" description="Decreased IgE-binding to the wild-type epitope 97-L--A-172." evidence="9">
    <original>R</original>
    <variation>A</variation>
    <location>
        <position position="161"/>
    </location>
</feature>
<feature type="mutagenesis site" description="Significantly decreased IgE-binding to the wild-type epitope 97-L--A-172." evidence="9">
    <original>R</original>
    <variation>A</variation>
    <location>
        <position position="163"/>
    </location>
</feature>
<feature type="mutagenesis site" description="Decreased IgE-binding to the wild-type epitope 97-L--A-172." evidence="9">
    <original>D</original>
    <variation>A</variation>
    <location>
        <position position="166"/>
    </location>
</feature>
<feature type="mutagenesis site" description="Decreased IgE-binding to the wild-type epitope 347-R--N-387." evidence="8">
    <original>L</original>
    <variation>R</variation>
    <location>
        <position position="359"/>
    </location>
</feature>
<feature type="mutagenesis site" description="Significantly decreased IgE-binding to the wild-type epitope 347-R--N-387." evidence="8">
    <original>L</original>
    <variation>R</variation>
    <location>
        <position position="362"/>
    </location>
</feature>
<feature type="mutagenesis site" description="Significantly decreased IgE-binding to the wild-type epitope 347-R--N-387." evidence="8">
    <original>L</original>
    <variation>R</variation>
    <location>
        <position position="367"/>
    </location>
</feature>
<feature type="mutagenesis site" description="Decreased IgE-binding to the wild-type epitope 347-R--N-387." evidence="8">
    <original>V</original>
    <variation>R</variation>
    <location>
        <position position="372"/>
    </location>
</feature>
<feature type="mutagenesis site" description="Significantly decreased IgE-binding to the wild-type epitope 347-R--N-387." evidence="8">
    <original>L</original>
    <variation>R</variation>
    <location>
        <position position="374"/>
    </location>
</feature>